<reference key="1">
    <citation type="submission" date="2007-05" db="EMBL/GenBank/DDBJ databases">
        <title>Complete sequence of chromosome of Staphylococcus aureus subsp. aureus JH9.</title>
        <authorList>
            <consortium name="US DOE Joint Genome Institute"/>
            <person name="Copeland A."/>
            <person name="Lucas S."/>
            <person name="Lapidus A."/>
            <person name="Barry K."/>
            <person name="Detter J.C."/>
            <person name="Glavina del Rio T."/>
            <person name="Hammon N."/>
            <person name="Israni S."/>
            <person name="Pitluck S."/>
            <person name="Chain P."/>
            <person name="Malfatti S."/>
            <person name="Shin M."/>
            <person name="Vergez L."/>
            <person name="Schmutz J."/>
            <person name="Larimer F."/>
            <person name="Land M."/>
            <person name="Hauser L."/>
            <person name="Kyrpides N."/>
            <person name="Kim E."/>
            <person name="Tomasz A."/>
            <person name="Richardson P."/>
        </authorList>
    </citation>
    <scope>NUCLEOTIDE SEQUENCE [LARGE SCALE GENOMIC DNA]</scope>
    <source>
        <strain>JH9</strain>
    </source>
</reference>
<dbReference type="EC" id="2.7.7.3" evidence="1"/>
<dbReference type="EMBL" id="CP000703">
    <property type="protein sequence ID" value="ABQ48984.1"/>
    <property type="molecule type" value="Genomic_DNA"/>
</dbReference>
<dbReference type="RefSeq" id="WP_000401377.1">
    <property type="nucleotide sequence ID" value="NC_009487.1"/>
</dbReference>
<dbReference type="SMR" id="A5IS11"/>
<dbReference type="GeneID" id="98345441"/>
<dbReference type="KEGG" id="saj:SaurJH9_1184"/>
<dbReference type="HOGENOM" id="CLU_100149_0_1_9"/>
<dbReference type="UniPathway" id="UPA00241">
    <property type="reaction ID" value="UER00355"/>
</dbReference>
<dbReference type="GO" id="GO:0005737">
    <property type="term" value="C:cytoplasm"/>
    <property type="evidence" value="ECO:0007669"/>
    <property type="project" value="UniProtKB-SubCell"/>
</dbReference>
<dbReference type="GO" id="GO:0005524">
    <property type="term" value="F:ATP binding"/>
    <property type="evidence" value="ECO:0007669"/>
    <property type="project" value="UniProtKB-KW"/>
</dbReference>
<dbReference type="GO" id="GO:0004595">
    <property type="term" value="F:pantetheine-phosphate adenylyltransferase activity"/>
    <property type="evidence" value="ECO:0007669"/>
    <property type="project" value="UniProtKB-UniRule"/>
</dbReference>
<dbReference type="GO" id="GO:0015937">
    <property type="term" value="P:coenzyme A biosynthetic process"/>
    <property type="evidence" value="ECO:0007669"/>
    <property type="project" value="UniProtKB-UniRule"/>
</dbReference>
<dbReference type="CDD" id="cd02163">
    <property type="entry name" value="PPAT"/>
    <property type="match status" value="1"/>
</dbReference>
<dbReference type="Gene3D" id="3.40.50.620">
    <property type="entry name" value="HUPs"/>
    <property type="match status" value="1"/>
</dbReference>
<dbReference type="HAMAP" id="MF_00151">
    <property type="entry name" value="PPAT_bact"/>
    <property type="match status" value="1"/>
</dbReference>
<dbReference type="InterPro" id="IPR004821">
    <property type="entry name" value="Cyt_trans-like"/>
</dbReference>
<dbReference type="InterPro" id="IPR001980">
    <property type="entry name" value="PPAT"/>
</dbReference>
<dbReference type="InterPro" id="IPR014729">
    <property type="entry name" value="Rossmann-like_a/b/a_fold"/>
</dbReference>
<dbReference type="NCBIfam" id="TIGR01510">
    <property type="entry name" value="coaD_prev_kdtB"/>
    <property type="match status" value="1"/>
</dbReference>
<dbReference type="NCBIfam" id="TIGR00125">
    <property type="entry name" value="cyt_tran_rel"/>
    <property type="match status" value="1"/>
</dbReference>
<dbReference type="PANTHER" id="PTHR21342">
    <property type="entry name" value="PHOSPHOPANTETHEINE ADENYLYLTRANSFERASE"/>
    <property type="match status" value="1"/>
</dbReference>
<dbReference type="PANTHER" id="PTHR21342:SF1">
    <property type="entry name" value="PHOSPHOPANTETHEINE ADENYLYLTRANSFERASE"/>
    <property type="match status" value="1"/>
</dbReference>
<dbReference type="Pfam" id="PF01467">
    <property type="entry name" value="CTP_transf_like"/>
    <property type="match status" value="1"/>
</dbReference>
<dbReference type="PRINTS" id="PR01020">
    <property type="entry name" value="LPSBIOSNTHSS"/>
</dbReference>
<dbReference type="SUPFAM" id="SSF52374">
    <property type="entry name" value="Nucleotidylyl transferase"/>
    <property type="match status" value="1"/>
</dbReference>
<keyword id="KW-0067">ATP-binding</keyword>
<keyword id="KW-0173">Coenzyme A biosynthesis</keyword>
<keyword id="KW-0963">Cytoplasm</keyword>
<keyword id="KW-0460">Magnesium</keyword>
<keyword id="KW-0547">Nucleotide-binding</keyword>
<keyword id="KW-0548">Nucleotidyltransferase</keyword>
<keyword id="KW-0808">Transferase</keyword>
<organism>
    <name type="scientific">Staphylococcus aureus (strain JH9)</name>
    <dbReference type="NCBI Taxonomy" id="359786"/>
    <lineage>
        <taxon>Bacteria</taxon>
        <taxon>Bacillati</taxon>
        <taxon>Bacillota</taxon>
        <taxon>Bacilli</taxon>
        <taxon>Bacillales</taxon>
        <taxon>Staphylococcaceae</taxon>
        <taxon>Staphylococcus</taxon>
    </lineage>
</organism>
<protein>
    <recommendedName>
        <fullName evidence="1">Phosphopantetheine adenylyltransferase</fullName>
        <ecNumber evidence="1">2.7.7.3</ecNumber>
    </recommendedName>
    <alternativeName>
        <fullName evidence="1">Dephospho-CoA pyrophosphorylase</fullName>
    </alternativeName>
    <alternativeName>
        <fullName evidence="1">Pantetheine-phosphate adenylyltransferase</fullName>
        <shortName evidence="1">PPAT</shortName>
    </alternativeName>
</protein>
<accession>A5IS11</accession>
<evidence type="ECO:0000255" key="1">
    <source>
        <dbReference type="HAMAP-Rule" id="MF_00151"/>
    </source>
</evidence>
<proteinExistence type="inferred from homology"/>
<comment type="function">
    <text evidence="1">Reversibly transfers an adenylyl group from ATP to 4'-phosphopantetheine, yielding dephospho-CoA (dPCoA) and pyrophosphate.</text>
</comment>
<comment type="catalytic activity">
    <reaction evidence="1">
        <text>(R)-4'-phosphopantetheine + ATP + H(+) = 3'-dephospho-CoA + diphosphate</text>
        <dbReference type="Rhea" id="RHEA:19801"/>
        <dbReference type="ChEBI" id="CHEBI:15378"/>
        <dbReference type="ChEBI" id="CHEBI:30616"/>
        <dbReference type="ChEBI" id="CHEBI:33019"/>
        <dbReference type="ChEBI" id="CHEBI:57328"/>
        <dbReference type="ChEBI" id="CHEBI:61723"/>
        <dbReference type="EC" id="2.7.7.3"/>
    </reaction>
</comment>
<comment type="cofactor">
    <cofactor evidence="1">
        <name>Mg(2+)</name>
        <dbReference type="ChEBI" id="CHEBI:18420"/>
    </cofactor>
</comment>
<comment type="pathway">
    <text evidence="1">Cofactor biosynthesis; coenzyme A biosynthesis; CoA from (R)-pantothenate: step 4/5.</text>
</comment>
<comment type="subunit">
    <text evidence="1">Homohexamer.</text>
</comment>
<comment type="subcellular location">
    <subcellularLocation>
        <location evidence="1">Cytoplasm</location>
    </subcellularLocation>
</comment>
<comment type="similarity">
    <text evidence="1">Belongs to the bacterial CoaD family.</text>
</comment>
<gene>
    <name evidence="1" type="primary">coaD</name>
    <name type="ordered locus">SaurJH9_1184</name>
</gene>
<sequence>MEHTIAVIPGSFDPITYGHLDIIERSTDRFDEIHVCVLKNSKKEGTFSLEERMDLIEQSVKHLPNVKVHQFSGLLVDYCEQVGAKTIIRGLRAVSDFEYELRLTSMNKKLNNEIETLYMMSSTNYSFISSSIVKEVAAYRADISEFVPPYVEKALKKKFK</sequence>
<feature type="chain" id="PRO_1000076795" description="Phosphopantetheine adenylyltransferase">
    <location>
        <begin position="1"/>
        <end position="160"/>
    </location>
</feature>
<feature type="binding site" evidence="1">
    <location>
        <begin position="11"/>
        <end position="12"/>
    </location>
    <ligand>
        <name>ATP</name>
        <dbReference type="ChEBI" id="CHEBI:30616"/>
    </ligand>
</feature>
<feature type="binding site" evidence="1">
    <location>
        <position position="11"/>
    </location>
    <ligand>
        <name>substrate</name>
    </ligand>
</feature>
<feature type="binding site" evidence="1">
    <location>
        <position position="19"/>
    </location>
    <ligand>
        <name>ATP</name>
        <dbReference type="ChEBI" id="CHEBI:30616"/>
    </ligand>
</feature>
<feature type="binding site" evidence="1">
    <location>
        <position position="43"/>
    </location>
    <ligand>
        <name>substrate</name>
    </ligand>
</feature>
<feature type="binding site" evidence="1">
    <location>
        <position position="75"/>
    </location>
    <ligand>
        <name>substrate</name>
    </ligand>
</feature>
<feature type="binding site" evidence="1">
    <location>
        <position position="89"/>
    </location>
    <ligand>
        <name>substrate</name>
    </ligand>
</feature>
<feature type="binding site" evidence="1">
    <location>
        <begin position="90"/>
        <end position="92"/>
    </location>
    <ligand>
        <name>ATP</name>
        <dbReference type="ChEBI" id="CHEBI:30616"/>
    </ligand>
</feature>
<feature type="binding site" evidence="1">
    <location>
        <position position="100"/>
    </location>
    <ligand>
        <name>ATP</name>
        <dbReference type="ChEBI" id="CHEBI:30616"/>
    </ligand>
</feature>
<feature type="binding site" evidence="1">
    <location>
        <begin position="125"/>
        <end position="131"/>
    </location>
    <ligand>
        <name>ATP</name>
        <dbReference type="ChEBI" id="CHEBI:30616"/>
    </ligand>
</feature>
<feature type="site" description="Transition state stabilizer" evidence="1">
    <location>
        <position position="19"/>
    </location>
</feature>
<name>COAD_STAA9</name>